<keyword id="KW-0029">Amino-acid transport</keyword>
<keyword id="KW-0472">Membrane</keyword>
<keyword id="KW-1185">Reference proteome</keyword>
<keyword id="KW-0812">Transmembrane</keyword>
<keyword id="KW-1133">Transmembrane helix</keyword>
<keyword id="KW-0813">Transport</keyword>
<proteinExistence type="evidence at protein level"/>
<accession>P38967</accession>
<accession>D6W245</accession>
<comment type="function">
    <text evidence="3 4">Required for high-affinity tryptophan transport. Also transports cysteine, phenyalanine and tyrosine.</text>
</comment>
<comment type="subcellular location">
    <subcellularLocation>
        <location>Membrane</location>
        <topology>Multi-pass membrane protein</topology>
    </subcellularLocation>
</comment>
<comment type="miscellaneous">
    <text evidence="5">Present with 752 molecules/cell in log phase SD medium.</text>
</comment>
<comment type="similarity">
    <text evidence="6">Belongs to the amino acid-polyamine-organocation (APC) superfamily. YAT (TC 2.A.3.10) family.</text>
</comment>
<protein>
    <recommendedName>
        <fullName>Tryptophan permease</fullName>
    </recommendedName>
    <alternativeName>
        <fullName>Tryptophan amino acid transporter</fullName>
    </alternativeName>
</protein>
<gene>
    <name type="primary">TAT2</name>
    <name type="synonym">LTG3</name>
    <name type="synonym">SAB2</name>
    <name type="synonym">SCM2</name>
    <name type="synonym">TAP2</name>
    <name type="ordered locus">YOL020W</name>
</gene>
<feature type="chain" id="PRO_0000054160" description="Tryptophan permease">
    <location>
        <begin position="1"/>
        <end position="592"/>
    </location>
</feature>
<feature type="topological domain" description="Cytoplasmic" evidence="1">
    <location>
        <begin position="1"/>
        <end position="87"/>
    </location>
</feature>
<feature type="transmembrane region" description="Helical" evidence="1">
    <location>
        <begin position="88"/>
        <end position="108"/>
    </location>
</feature>
<feature type="topological domain" description="Extracellular" evidence="1">
    <location>
        <begin position="109"/>
        <end position="113"/>
    </location>
</feature>
<feature type="transmembrane region" description="Helical" evidence="1">
    <location>
        <begin position="114"/>
        <end position="134"/>
    </location>
</feature>
<feature type="topological domain" description="Cytoplasmic" evidence="1">
    <location>
        <begin position="135"/>
        <end position="160"/>
    </location>
</feature>
<feature type="transmembrane region" description="Helical" evidence="1">
    <location>
        <begin position="161"/>
        <end position="181"/>
    </location>
</feature>
<feature type="topological domain" description="Extracellular" evidence="1">
    <location>
        <begin position="182"/>
        <end position="192"/>
    </location>
</feature>
<feature type="transmembrane region" description="Helical" evidence="1">
    <location>
        <begin position="193"/>
        <end position="213"/>
    </location>
</feature>
<feature type="topological domain" description="Cytoplasmic" evidence="1">
    <location>
        <begin position="214"/>
        <end position="226"/>
    </location>
</feature>
<feature type="transmembrane region" description="Helical" evidence="1">
    <location>
        <begin position="227"/>
        <end position="247"/>
    </location>
</feature>
<feature type="topological domain" description="Extracellular" evidence="1">
    <location>
        <begin position="248"/>
        <end position="266"/>
    </location>
</feature>
<feature type="transmembrane region" description="Helical" evidence="1">
    <location>
        <begin position="267"/>
        <end position="287"/>
    </location>
</feature>
<feature type="topological domain" description="Cytoplasmic" evidence="1">
    <location>
        <begin position="288"/>
        <end position="306"/>
    </location>
</feature>
<feature type="transmembrane region" description="Helical" evidence="1">
    <location>
        <begin position="307"/>
        <end position="327"/>
    </location>
</feature>
<feature type="topological domain" description="Extracellular" evidence="1">
    <location>
        <begin position="328"/>
        <end position="358"/>
    </location>
</feature>
<feature type="transmembrane region" description="Helical" evidence="1">
    <location>
        <begin position="359"/>
        <end position="379"/>
    </location>
</feature>
<feature type="topological domain" description="Cytoplasmic" evidence="1">
    <location>
        <begin position="380"/>
        <end position="404"/>
    </location>
</feature>
<feature type="transmembrane region" description="Helical" evidence="1">
    <location>
        <begin position="405"/>
        <end position="425"/>
    </location>
</feature>
<feature type="topological domain" description="Extracellular" evidence="1">
    <location>
        <begin position="426"/>
        <end position="428"/>
    </location>
</feature>
<feature type="transmembrane region" description="Helical" evidence="1">
    <location>
        <begin position="429"/>
        <end position="449"/>
    </location>
</feature>
<feature type="topological domain" description="Cytoplasmic" evidence="1">
    <location>
        <begin position="450"/>
        <end position="472"/>
    </location>
</feature>
<feature type="transmembrane region" description="Helical" evidence="1">
    <location>
        <begin position="473"/>
        <end position="493"/>
    </location>
</feature>
<feature type="topological domain" description="Extracellular" evidence="1">
    <location>
        <begin position="494"/>
        <end position="514"/>
    </location>
</feature>
<feature type="transmembrane region" description="Helical" evidence="1">
    <location>
        <begin position="515"/>
        <end position="535"/>
    </location>
</feature>
<feature type="topological domain" description="Cytoplasmic" evidence="1">
    <location>
        <begin position="536"/>
        <end position="592"/>
    </location>
</feature>
<feature type="region of interest" description="Disordered" evidence="2">
    <location>
        <begin position="31"/>
        <end position="53"/>
    </location>
</feature>
<feature type="sequence conflict" description="In Ref. 3; BAA03811." evidence="6" ref="3">
    <original>Q</original>
    <variation>T</variation>
    <location>
        <position position="187"/>
    </location>
</feature>
<dbReference type="EMBL" id="X79150">
    <property type="protein sequence ID" value="CAA55777.1"/>
    <property type="molecule type" value="Genomic_DNA"/>
</dbReference>
<dbReference type="EMBL" id="L33461">
    <property type="protein sequence ID" value="AAA60324.1"/>
    <property type="molecule type" value="Genomic_DNA"/>
</dbReference>
<dbReference type="EMBL" id="D16304">
    <property type="protein sequence ID" value="BAA03811.1"/>
    <property type="molecule type" value="Genomic_DNA"/>
</dbReference>
<dbReference type="EMBL" id="U66834">
    <property type="protein sequence ID" value="AAB07526.1"/>
    <property type="molecule type" value="Genomic_DNA"/>
</dbReference>
<dbReference type="EMBL" id="Z74761">
    <property type="protein sequence ID" value="CAA99019.1"/>
    <property type="molecule type" value="Genomic_DNA"/>
</dbReference>
<dbReference type="EMBL" id="Z74762">
    <property type="protein sequence ID" value="CAA99020.1"/>
    <property type="molecule type" value="Genomic_DNA"/>
</dbReference>
<dbReference type="EMBL" id="BK006948">
    <property type="protein sequence ID" value="DAA10761.1"/>
    <property type="molecule type" value="Genomic_DNA"/>
</dbReference>
<dbReference type="PIR" id="S46273">
    <property type="entry name" value="S46273"/>
</dbReference>
<dbReference type="RefSeq" id="NP_014622.1">
    <property type="nucleotide sequence ID" value="NM_001183274.1"/>
</dbReference>
<dbReference type="SMR" id="P38967"/>
<dbReference type="BioGRID" id="34382">
    <property type="interactions" value="106"/>
</dbReference>
<dbReference type="DIP" id="DIP-1782N"/>
<dbReference type="FunCoup" id="P38967">
    <property type="interactions" value="232"/>
</dbReference>
<dbReference type="IntAct" id="P38967">
    <property type="interactions" value="5"/>
</dbReference>
<dbReference type="MINT" id="P38967"/>
<dbReference type="STRING" id="4932.YOL020W"/>
<dbReference type="TCDB" id="2.A.3.10.8">
    <property type="family name" value="the amino acid-polyamine-organocation (apc) family"/>
</dbReference>
<dbReference type="iPTMnet" id="P38967"/>
<dbReference type="SwissPalm" id="P38967"/>
<dbReference type="PaxDb" id="4932-YOL020W"/>
<dbReference type="PeptideAtlas" id="P38967"/>
<dbReference type="TopDownProteomics" id="P38967"/>
<dbReference type="EnsemblFungi" id="YOL020W_mRNA">
    <property type="protein sequence ID" value="YOL020W"/>
    <property type="gene ID" value="YOL020W"/>
</dbReference>
<dbReference type="GeneID" id="854139"/>
<dbReference type="KEGG" id="sce:YOL020W"/>
<dbReference type="AGR" id="SGD:S000005380"/>
<dbReference type="SGD" id="S000005380">
    <property type="gene designation" value="TAT2"/>
</dbReference>
<dbReference type="VEuPathDB" id="FungiDB:YOL020W"/>
<dbReference type="eggNOG" id="KOG1286">
    <property type="taxonomic scope" value="Eukaryota"/>
</dbReference>
<dbReference type="HOGENOM" id="CLU_007946_12_0_1"/>
<dbReference type="InParanoid" id="P38967"/>
<dbReference type="OMA" id="HLIMIAI"/>
<dbReference type="OrthoDB" id="3900342at2759"/>
<dbReference type="BioCyc" id="YEAST:G3O-33436-MONOMER"/>
<dbReference type="BioGRID-ORCS" id="854139">
    <property type="hits" value="0 hits in 10 CRISPR screens"/>
</dbReference>
<dbReference type="PRO" id="PR:P38967"/>
<dbReference type="Proteomes" id="UP000002311">
    <property type="component" value="Chromosome XV"/>
</dbReference>
<dbReference type="RNAct" id="P38967">
    <property type="molecule type" value="protein"/>
</dbReference>
<dbReference type="GO" id="GO:0032126">
    <property type="term" value="C:eisosome"/>
    <property type="evidence" value="ECO:0000314"/>
    <property type="project" value="SGD"/>
</dbReference>
<dbReference type="GO" id="GO:0005783">
    <property type="term" value="C:endoplasmic reticulum"/>
    <property type="evidence" value="ECO:0007005"/>
    <property type="project" value="SGD"/>
</dbReference>
<dbReference type="GO" id="GO:0016020">
    <property type="term" value="C:membrane"/>
    <property type="evidence" value="ECO:0000318"/>
    <property type="project" value="GO_Central"/>
</dbReference>
<dbReference type="GO" id="GO:0005886">
    <property type="term" value="C:plasma membrane"/>
    <property type="evidence" value="ECO:0000314"/>
    <property type="project" value="SGD"/>
</dbReference>
<dbReference type="GO" id="GO:0015171">
    <property type="term" value="F:amino acid transmembrane transporter activity"/>
    <property type="evidence" value="ECO:0000318"/>
    <property type="project" value="GO_Central"/>
</dbReference>
<dbReference type="GO" id="GO:0015173">
    <property type="term" value="F:aromatic amino acid transmembrane transporter activity"/>
    <property type="evidence" value="ECO:0000314"/>
    <property type="project" value="SGD"/>
</dbReference>
<dbReference type="GO" id="GO:0003824">
    <property type="term" value="F:catalytic activity"/>
    <property type="evidence" value="ECO:0007669"/>
    <property type="project" value="InterPro"/>
</dbReference>
<dbReference type="GO" id="GO:0005300">
    <property type="term" value="F:high-affinity tryptophan transmembrane transporter activity"/>
    <property type="evidence" value="ECO:0000315"/>
    <property type="project" value="SGD"/>
</dbReference>
<dbReference type="GO" id="GO:0003333">
    <property type="term" value="P:amino acid transmembrane transport"/>
    <property type="evidence" value="ECO:0000318"/>
    <property type="project" value="GO_Central"/>
</dbReference>
<dbReference type="GO" id="GO:0015801">
    <property type="term" value="P:aromatic amino acid transport"/>
    <property type="evidence" value="ECO:0000314"/>
    <property type="project" value="SGD"/>
</dbReference>
<dbReference type="GO" id="GO:0015827">
    <property type="term" value="P:tryptophan transport"/>
    <property type="evidence" value="ECO:0000315"/>
    <property type="project" value="SGD"/>
</dbReference>
<dbReference type="FunFam" id="1.20.1740.10:FF:000017">
    <property type="entry name" value="Amino acid permease"/>
    <property type="match status" value="1"/>
</dbReference>
<dbReference type="Gene3D" id="1.20.1740.10">
    <property type="entry name" value="Amino acid/polyamine transporter I"/>
    <property type="match status" value="1"/>
</dbReference>
<dbReference type="InterPro" id="IPR004841">
    <property type="entry name" value="AA-permease/SLC12A_dom"/>
</dbReference>
<dbReference type="InterPro" id="IPR004840">
    <property type="entry name" value="Amino_acid_permease_CS"/>
</dbReference>
<dbReference type="InterPro" id="IPR004762">
    <property type="entry name" value="Amino_acid_permease_fungi"/>
</dbReference>
<dbReference type="InterPro" id="IPR050524">
    <property type="entry name" value="APC_YAT"/>
</dbReference>
<dbReference type="InterPro" id="IPR013792">
    <property type="entry name" value="RNA3'P_cycl/enolpyr_Trfase_a/b"/>
</dbReference>
<dbReference type="NCBIfam" id="TIGR00913">
    <property type="entry name" value="2A0310"/>
    <property type="match status" value="1"/>
</dbReference>
<dbReference type="PANTHER" id="PTHR43341">
    <property type="entry name" value="AMINO ACID PERMEASE"/>
    <property type="match status" value="1"/>
</dbReference>
<dbReference type="PANTHER" id="PTHR43341:SF16">
    <property type="entry name" value="TRYPTOPHAN PERMEASE"/>
    <property type="match status" value="1"/>
</dbReference>
<dbReference type="Pfam" id="PF00324">
    <property type="entry name" value="AA_permease"/>
    <property type="match status" value="1"/>
</dbReference>
<dbReference type="PIRSF" id="PIRSF006060">
    <property type="entry name" value="AA_transporter"/>
    <property type="match status" value="1"/>
</dbReference>
<dbReference type="SUPFAM" id="SSF55205">
    <property type="entry name" value="EPT/RTPC-like"/>
    <property type="match status" value="1"/>
</dbReference>
<dbReference type="PROSITE" id="PS00218">
    <property type="entry name" value="AMINO_ACID_PERMEASE_1"/>
    <property type="match status" value="1"/>
</dbReference>
<evidence type="ECO:0000255" key="1"/>
<evidence type="ECO:0000256" key="2">
    <source>
        <dbReference type="SAM" id="MobiDB-lite"/>
    </source>
</evidence>
<evidence type="ECO:0000269" key="3">
    <source>
    </source>
</evidence>
<evidence type="ECO:0000269" key="4">
    <source>
    </source>
</evidence>
<evidence type="ECO:0000269" key="5">
    <source>
    </source>
</evidence>
<evidence type="ECO:0000305" key="6"/>
<sequence>MTEDFISSVKRSNEELKERKSNFGFVEYKSKQLTSSSSHNSNSSHHDDDNQHGKRNIFQRCVDSFKSPLDGSFDTSNLKRTLKPRHLIMIAIGGSIGTGLFVGSGKAIAEGGPLGVVIGWAIAGSQIIGTIHGLGEITVRFPVVGAFANYGTRFLDPSISFVVSTIYVLQWFFVLPLEIIAAAMTVQYWNSSIDPVIWVAIFYAVIVSINLFGVRGFGEAEFAFSTIKAITVCGFIILCVVLICGGGPDHEFIGAKYWHDPGCLANGFPGVLSVLVVASYSLGGIEMTCLASGETDPKGLPSAIKQVFWRILFFFLISLTLVGFLVPYTNQNLLGGSSVDNSPFVIAIKLHHIKALPSIVNAVILISVLSVGNSCIFASSRTLCSMAHQGLIPWWFGYIDRAGRPLVGIMANSLFGLLAFLVKSGSMSEVFNWLMAIAGLATCIVWLSINLSHIRFRLAMKAQGKSLDELEFVSAVGIWGSAYSALINCLILIAQFYCSLWPIGGWTSGKERAKIFFQNYLCALIMLFIFIVHKIYYKCQTGKWWGVKALKDIDLETDRKDIDIEIVKQEIAEKKMYLDSRPWYVRQFHFWC</sequence>
<reference key="1">
    <citation type="journal article" date="1994" name="Mol. Cell. Biol.">
        <title>Two FK506 resistance-conferring genes in Saccharomyces cerevisiae, TAT1 and TAT2, encode amino acid permeases mediating tyrosine and tryptophan uptake.</title>
        <authorList>
            <person name="Schmidt A."/>
            <person name="Hall M.N."/>
            <person name="Koller A."/>
        </authorList>
    </citation>
    <scope>NUCLEOTIDE SEQUENCE [GENOMIC DNA]</scope>
    <source>
        <strain>JK9-3D</strain>
    </source>
</reference>
<reference key="2">
    <citation type="journal article" date="1994" name="Mol. Gen. Genet.">
        <title>SCM2, a tryptophan permease in Saccharomyces cerevisiae, is important for cell growth.</title>
        <authorList>
            <person name="Chen X.H."/>
            <person name="Xiao Z."/>
            <person name="Fitzgerald-Hayes M."/>
        </authorList>
    </citation>
    <scope>NUCLEOTIDE SEQUENCE [GENOMIC DNA]</scope>
</reference>
<reference key="3">
    <citation type="journal article" date="1994" name="J. Ferment. Bioeng.">
        <title>Cloning and nucleotide sequence of a gene conferring ability to grow at a low temperature on Saccharomyces cerevisiae tryptophan auxotroph.</title>
        <authorList>
            <person name="Kawamura D."/>
            <person name="Yamashita I."/>
            <person name="Nimi O."/>
            <person name="Toh-e A."/>
        </authorList>
    </citation>
    <scope>NUCLEOTIDE SEQUENCE [GENOMIC DNA]</scope>
    <source>
        <strain>IFO 10151 / YNN140</strain>
    </source>
</reference>
<reference key="4">
    <citation type="submission" date="1996-09" db="EMBL/GenBank/DDBJ databases">
        <authorList>
            <person name="Shin Y.H."/>
            <person name="Goo D.M."/>
            <person name="So I.S."/>
            <person name="Rhode P.R."/>
            <person name="Campbell J.L."/>
            <person name="Kim J."/>
        </authorList>
    </citation>
    <scope>NUCLEOTIDE SEQUENCE [GENOMIC DNA]</scope>
</reference>
<reference key="5">
    <citation type="journal article" date="1997" name="Nature">
        <title>The nucleotide sequence of Saccharomyces cerevisiae chromosome XV.</title>
        <authorList>
            <person name="Dujon B."/>
            <person name="Albermann K."/>
            <person name="Aldea M."/>
            <person name="Alexandraki D."/>
            <person name="Ansorge W."/>
            <person name="Arino J."/>
            <person name="Benes V."/>
            <person name="Bohn C."/>
            <person name="Bolotin-Fukuhara M."/>
            <person name="Bordonne R."/>
            <person name="Boyer J."/>
            <person name="Camasses A."/>
            <person name="Casamayor A."/>
            <person name="Casas C."/>
            <person name="Cheret G."/>
            <person name="Cziepluch C."/>
            <person name="Daignan-Fornier B."/>
            <person name="Dang V.-D."/>
            <person name="de Haan M."/>
            <person name="Delius H."/>
            <person name="Durand P."/>
            <person name="Fairhead C."/>
            <person name="Feldmann H."/>
            <person name="Gaillon L."/>
            <person name="Galisson F."/>
            <person name="Gamo F.-J."/>
            <person name="Gancedo C."/>
            <person name="Goffeau A."/>
            <person name="Goulding S.E."/>
            <person name="Grivell L.A."/>
            <person name="Habbig B."/>
            <person name="Hand N.J."/>
            <person name="Hani J."/>
            <person name="Hattenhorst U."/>
            <person name="Hebling U."/>
            <person name="Hernando Y."/>
            <person name="Herrero E."/>
            <person name="Heumann K."/>
            <person name="Hiesel R."/>
            <person name="Hilger F."/>
            <person name="Hofmann B."/>
            <person name="Hollenberg C.P."/>
            <person name="Hughes B."/>
            <person name="Jauniaux J.-C."/>
            <person name="Kalogeropoulos A."/>
            <person name="Katsoulou C."/>
            <person name="Kordes E."/>
            <person name="Lafuente M.J."/>
            <person name="Landt O."/>
            <person name="Louis E.J."/>
            <person name="Maarse A.C."/>
            <person name="Madania A."/>
            <person name="Mannhaupt G."/>
            <person name="Marck C."/>
            <person name="Martin R.P."/>
            <person name="Mewes H.-W."/>
            <person name="Michaux G."/>
            <person name="Paces V."/>
            <person name="Parle-McDermott A.G."/>
            <person name="Pearson B.M."/>
            <person name="Perrin A."/>
            <person name="Pettersson B."/>
            <person name="Poch O."/>
            <person name="Pohl T.M."/>
            <person name="Poirey R."/>
            <person name="Portetelle D."/>
            <person name="Pujol A."/>
            <person name="Purnelle B."/>
            <person name="Ramezani Rad M."/>
            <person name="Rechmann S."/>
            <person name="Schwager C."/>
            <person name="Schweizer M."/>
            <person name="Sor F."/>
            <person name="Sterky F."/>
            <person name="Tarassov I.A."/>
            <person name="Teodoru C."/>
            <person name="Tettelin H."/>
            <person name="Thierry A."/>
            <person name="Tobiasch E."/>
            <person name="Tzermia M."/>
            <person name="Uhlen M."/>
            <person name="Unseld M."/>
            <person name="Valens M."/>
            <person name="Vandenbol M."/>
            <person name="Vetter I."/>
            <person name="Vlcek C."/>
            <person name="Voet M."/>
            <person name="Volckaert G."/>
            <person name="Voss H."/>
            <person name="Wambutt R."/>
            <person name="Wedler H."/>
            <person name="Wiemann S."/>
            <person name="Winsor B."/>
            <person name="Wolfe K.H."/>
            <person name="Zollner A."/>
            <person name="Zumstein E."/>
            <person name="Kleine K."/>
        </authorList>
    </citation>
    <scope>NUCLEOTIDE SEQUENCE [LARGE SCALE GENOMIC DNA]</scope>
    <source>
        <strain>ATCC 204508 / S288c</strain>
    </source>
</reference>
<reference key="6">
    <citation type="journal article" date="2014" name="G3 (Bethesda)">
        <title>The reference genome sequence of Saccharomyces cerevisiae: Then and now.</title>
        <authorList>
            <person name="Engel S.R."/>
            <person name="Dietrich F.S."/>
            <person name="Fisk D.G."/>
            <person name="Binkley G."/>
            <person name="Balakrishnan R."/>
            <person name="Costanzo M.C."/>
            <person name="Dwight S.S."/>
            <person name="Hitz B.C."/>
            <person name="Karra K."/>
            <person name="Nash R.S."/>
            <person name="Weng S."/>
            <person name="Wong E.D."/>
            <person name="Lloyd P."/>
            <person name="Skrzypek M.S."/>
            <person name="Miyasato S.R."/>
            <person name="Simison M."/>
            <person name="Cherry J.M."/>
        </authorList>
    </citation>
    <scope>GENOME REANNOTATION</scope>
    <source>
        <strain>ATCC 204508 / S288c</strain>
    </source>
</reference>
<reference key="7">
    <citation type="journal article" date="1999" name="Curr. Genet.">
        <title>Cysteine uptake by Saccharomyces cerevisiae is accomplished by multiple permeases.</title>
        <authorList>
            <person name="During-Olsen L."/>
            <person name="Regenberg B."/>
            <person name="Gjermansen C."/>
            <person name="Kielland-Brandt M.C."/>
            <person name="Hansen J."/>
        </authorList>
    </citation>
    <scope>FUNCTION IN L-CYSTEINE UPTAKE</scope>
</reference>
<reference key="8">
    <citation type="journal article" date="1999" name="Curr. Genet.">
        <title>Substrate specificity and gene expression of the amino-acid permeases in Saccharomyces cerevisiae.</title>
        <authorList>
            <person name="Regenberg B."/>
            <person name="During-Olsen L."/>
            <person name="Kielland-Brandt M.C."/>
            <person name="Holmberg S."/>
        </authorList>
    </citation>
    <scope>FUNCTION</scope>
</reference>
<reference key="9">
    <citation type="journal article" date="2003" name="Nature">
        <title>Global analysis of protein expression in yeast.</title>
        <authorList>
            <person name="Ghaemmaghami S."/>
            <person name="Huh W.-K."/>
            <person name="Bower K."/>
            <person name="Howson R.W."/>
            <person name="Belle A."/>
            <person name="Dephoure N."/>
            <person name="O'Shea E.K."/>
            <person name="Weissman J.S."/>
        </authorList>
    </citation>
    <scope>LEVEL OF PROTEIN EXPRESSION [LARGE SCALE ANALYSIS]</scope>
</reference>
<reference key="10">
    <citation type="journal article" date="2006" name="Proc. Natl. Acad. Sci. U.S.A.">
        <title>A global topology map of the Saccharomyces cerevisiae membrane proteome.</title>
        <authorList>
            <person name="Kim H."/>
            <person name="Melen K."/>
            <person name="Oesterberg M."/>
            <person name="von Heijne G."/>
        </authorList>
    </citation>
    <scope>TOPOLOGY [LARGE SCALE ANALYSIS]</scope>
    <source>
        <strain>ATCC 208353 / W303-1A</strain>
    </source>
</reference>
<name>TAT2_YEAST</name>
<organism>
    <name type="scientific">Saccharomyces cerevisiae (strain ATCC 204508 / S288c)</name>
    <name type="common">Baker's yeast</name>
    <dbReference type="NCBI Taxonomy" id="559292"/>
    <lineage>
        <taxon>Eukaryota</taxon>
        <taxon>Fungi</taxon>
        <taxon>Dikarya</taxon>
        <taxon>Ascomycota</taxon>
        <taxon>Saccharomycotina</taxon>
        <taxon>Saccharomycetes</taxon>
        <taxon>Saccharomycetales</taxon>
        <taxon>Saccharomycetaceae</taxon>
        <taxon>Saccharomyces</taxon>
    </lineage>
</organism>